<feature type="chain" id="PRO_0000078572" description="Chaperone protein DnaK">
    <location>
        <begin position="1"/>
        <end position="596"/>
    </location>
</feature>
<feature type="modified residue" description="Phosphothreonine; by autocatalysis" evidence="1">
    <location>
        <position position="180"/>
    </location>
</feature>
<feature type="sequence conflict" description="In Ref. 1." evidence="2" ref="1">
    <original>MAEKKEFVV</original>
    <variation>MSKII</variation>
    <location>
        <begin position="1"/>
        <end position="9"/>
    </location>
</feature>
<feature type="sequence conflict" description="In Ref. 1; AAC79725." evidence="2" ref="1">
    <original>A</original>
    <variation>P</variation>
    <location>
        <position position="108"/>
    </location>
</feature>
<feature type="sequence conflict" description="In Ref. 1; AAC79725." evidence="2" ref="1">
    <original>Y</original>
    <variation>F</variation>
    <location>
        <position position="111"/>
    </location>
</feature>
<feature type="sequence conflict" description="In Ref. 1; AAC79725." evidence="2" ref="1">
    <original>AGI</original>
    <variation>S</variation>
    <location>
        <begin position="138"/>
        <end position="140"/>
    </location>
</feature>
<feature type="sequence conflict" description="In Ref. 1; AAC79725." evidence="2" ref="1">
    <original>D</original>
    <variation>PLP</variation>
    <location>
        <position position="175"/>
    </location>
</feature>
<feature type="sequence conflict" description="In Ref. 1; AAC79725." evidence="2" ref="1">
    <original>I</original>
    <variation>T</variation>
    <location>
        <position position="188"/>
    </location>
</feature>
<feature type="sequence conflict" description="In Ref. 1; AAC79725." evidence="2" ref="1">
    <original>I</original>
    <variation>M</variation>
    <location>
        <position position="434"/>
    </location>
</feature>
<feature type="sequence conflict" description="In Ref. 1; AAC79725." evidence="2" ref="1">
    <original>E</original>
    <variation>D</variation>
    <location>
        <position position="534"/>
    </location>
</feature>
<accession>Q9WYK6</accession>
<accession>Q9ZFD2</accession>
<protein>
    <recommendedName>
        <fullName>Chaperone protein DnaK</fullName>
    </recommendedName>
    <alternativeName>
        <fullName>HSP70</fullName>
    </alternativeName>
    <alternativeName>
        <fullName>Heat shock 70 kDa protein</fullName>
    </alternativeName>
    <alternativeName>
        <fullName>Heat shock protein 70</fullName>
    </alternativeName>
</protein>
<dbReference type="EMBL" id="AF106330">
    <property type="protein sequence ID" value="AAC79725.1"/>
    <property type="molecule type" value="Genomic_DNA"/>
</dbReference>
<dbReference type="EMBL" id="AE000512">
    <property type="protein sequence ID" value="AAD35460.1"/>
    <property type="molecule type" value="Genomic_DNA"/>
</dbReference>
<dbReference type="PIR" id="C72385">
    <property type="entry name" value="C72385"/>
</dbReference>
<dbReference type="PIR" id="T46657">
    <property type="entry name" value="T46657"/>
</dbReference>
<dbReference type="RefSeq" id="NP_228184.1">
    <property type="nucleotide sequence ID" value="NC_000853.1"/>
</dbReference>
<dbReference type="RefSeq" id="WP_004083187.1">
    <property type="nucleotide sequence ID" value="NZ_CP011107.1"/>
</dbReference>
<dbReference type="SMR" id="Q9WYK6"/>
<dbReference type="FunCoup" id="Q9WYK6">
    <property type="interactions" value="388"/>
</dbReference>
<dbReference type="STRING" id="243274.TM_0373"/>
<dbReference type="PaxDb" id="243274-THEMA_02850"/>
<dbReference type="EnsemblBacteria" id="AAD35460">
    <property type="protein sequence ID" value="AAD35460"/>
    <property type="gene ID" value="TM_0373"/>
</dbReference>
<dbReference type="KEGG" id="tma:TM0373"/>
<dbReference type="KEGG" id="tmi:THEMA_02850"/>
<dbReference type="KEGG" id="tmm:Tmari_0371"/>
<dbReference type="KEGG" id="tmw:THMA_0381"/>
<dbReference type="eggNOG" id="COG0443">
    <property type="taxonomic scope" value="Bacteria"/>
</dbReference>
<dbReference type="InParanoid" id="Q9WYK6"/>
<dbReference type="OrthoDB" id="9766019at2"/>
<dbReference type="Proteomes" id="UP000008183">
    <property type="component" value="Chromosome"/>
</dbReference>
<dbReference type="GO" id="GO:0005524">
    <property type="term" value="F:ATP binding"/>
    <property type="evidence" value="ECO:0007669"/>
    <property type="project" value="UniProtKB-UniRule"/>
</dbReference>
<dbReference type="GO" id="GO:0016887">
    <property type="term" value="F:ATP hydrolysis activity"/>
    <property type="evidence" value="ECO:0000318"/>
    <property type="project" value="GO_Central"/>
</dbReference>
<dbReference type="GO" id="GO:0140662">
    <property type="term" value="F:ATP-dependent protein folding chaperone"/>
    <property type="evidence" value="ECO:0007669"/>
    <property type="project" value="InterPro"/>
</dbReference>
<dbReference type="GO" id="GO:0031072">
    <property type="term" value="F:heat shock protein binding"/>
    <property type="evidence" value="ECO:0000318"/>
    <property type="project" value="GO_Central"/>
</dbReference>
<dbReference type="GO" id="GO:0044183">
    <property type="term" value="F:protein folding chaperone"/>
    <property type="evidence" value="ECO:0000318"/>
    <property type="project" value="GO_Central"/>
</dbReference>
<dbReference type="GO" id="GO:0051082">
    <property type="term" value="F:unfolded protein binding"/>
    <property type="evidence" value="ECO:0007669"/>
    <property type="project" value="InterPro"/>
</dbReference>
<dbReference type="GO" id="GO:0051085">
    <property type="term" value="P:chaperone cofactor-dependent protein refolding"/>
    <property type="evidence" value="ECO:0000318"/>
    <property type="project" value="GO_Central"/>
</dbReference>
<dbReference type="GO" id="GO:0042026">
    <property type="term" value="P:protein refolding"/>
    <property type="evidence" value="ECO:0000318"/>
    <property type="project" value="GO_Central"/>
</dbReference>
<dbReference type="CDD" id="cd10234">
    <property type="entry name" value="ASKHA_NBD_HSP70_DnaK-like"/>
    <property type="match status" value="1"/>
</dbReference>
<dbReference type="FunFam" id="3.30.30.30:FF:000014">
    <property type="entry name" value="Chaperone protein DnaK"/>
    <property type="match status" value="1"/>
</dbReference>
<dbReference type="FunFam" id="2.60.34.10:FF:000014">
    <property type="entry name" value="Chaperone protein DnaK HSP70"/>
    <property type="match status" value="1"/>
</dbReference>
<dbReference type="FunFam" id="1.20.1270.10:FF:000001">
    <property type="entry name" value="Molecular chaperone DnaK"/>
    <property type="match status" value="1"/>
</dbReference>
<dbReference type="FunFam" id="3.30.420.40:FF:000071">
    <property type="entry name" value="Molecular chaperone DnaK"/>
    <property type="match status" value="1"/>
</dbReference>
<dbReference type="FunFam" id="3.90.640.10:FF:000003">
    <property type="entry name" value="Molecular chaperone DnaK"/>
    <property type="match status" value="1"/>
</dbReference>
<dbReference type="Gene3D" id="1.20.1270.10">
    <property type="match status" value="1"/>
</dbReference>
<dbReference type="Gene3D" id="3.30.30.30">
    <property type="match status" value="1"/>
</dbReference>
<dbReference type="Gene3D" id="3.30.420.40">
    <property type="match status" value="3"/>
</dbReference>
<dbReference type="Gene3D" id="3.90.640.10">
    <property type="entry name" value="Actin, Chain A, domain 4"/>
    <property type="match status" value="1"/>
</dbReference>
<dbReference type="Gene3D" id="2.60.34.10">
    <property type="entry name" value="Substrate Binding Domain Of DNAk, Chain A, domain 1"/>
    <property type="match status" value="1"/>
</dbReference>
<dbReference type="HAMAP" id="MF_00332">
    <property type="entry name" value="DnaK"/>
    <property type="match status" value="1"/>
</dbReference>
<dbReference type="InterPro" id="IPR043129">
    <property type="entry name" value="ATPase_NBD"/>
</dbReference>
<dbReference type="InterPro" id="IPR012725">
    <property type="entry name" value="Chaperone_DnaK"/>
</dbReference>
<dbReference type="InterPro" id="IPR018181">
    <property type="entry name" value="Heat_shock_70_CS"/>
</dbReference>
<dbReference type="InterPro" id="IPR029048">
    <property type="entry name" value="HSP70_C_sf"/>
</dbReference>
<dbReference type="InterPro" id="IPR029047">
    <property type="entry name" value="HSP70_peptide-bd_sf"/>
</dbReference>
<dbReference type="InterPro" id="IPR013126">
    <property type="entry name" value="Hsp_70_fam"/>
</dbReference>
<dbReference type="NCBIfam" id="NF001413">
    <property type="entry name" value="PRK00290.1"/>
    <property type="match status" value="1"/>
</dbReference>
<dbReference type="NCBIfam" id="TIGR02350">
    <property type="entry name" value="prok_dnaK"/>
    <property type="match status" value="1"/>
</dbReference>
<dbReference type="PANTHER" id="PTHR19375">
    <property type="entry name" value="HEAT SHOCK PROTEIN 70KDA"/>
    <property type="match status" value="1"/>
</dbReference>
<dbReference type="Pfam" id="PF00012">
    <property type="entry name" value="HSP70"/>
    <property type="match status" value="1"/>
</dbReference>
<dbReference type="PRINTS" id="PR00301">
    <property type="entry name" value="HEATSHOCK70"/>
</dbReference>
<dbReference type="SUPFAM" id="SSF53067">
    <property type="entry name" value="Actin-like ATPase domain"/>
    <property type="match status" value="2"/>
</dbReference>
<dbReference type="SUPFAM" id="SSF100920">
    <property type="entry name" value="Heat shock protein 70kD (HSP70), peptide-binding domain"/>
    <property type="match status" value="1"/>
</dbReference>
<dbReference type="PROSITE" id="PS00297">
    <property type="entry name" value="HSP70_1"/>
    <property type="match status" value="1"/>
</dbReference>
<dbReference type="PROSITE" id="PS00329">
    <property type="entry name" value="HSP70_2"/>
    <property type="match status" value="1"/>
</dbReference>
<dbReference type="PROSITE" id="PS01036">
    <property type="entry name" value="HSP70_3"/>
    <property type="match status" value="1"/>
</dbReference>
<proteinExistence type="inferred from homology"/>
<name>DNAK_THEMA</name>
<keyword id="KW-0067">ATP-binding</keyword>
<keyword id="KW-0143">Chaperone</keyword>
<keyword id="KW-0547">Nucleotide-binding</keyword>
<keyword id="KW-0597">Phosphoprotein</keyword>
<keyword id="KW-1185">Reference proteome</keyword>
<keyword id="KW-0346">Stress response</keyword>
<reference key="1">
    <citation type="submission" date="1998-11" db="EMBL/GenBank/DDBJ databases">
        <title>The unique chaperone operon of Thermotoga maritima: cloning and initial characterization of a functional Hsp70 and sHsp.</title>
        <authorList>
            <person name="Michelini E.T."/>
            <person name="Flynn G.C."/>
        </authorList>
    </citation>
    <scope>NUCLEOTIDE SEQUENCE [GENOMIC DNA]</scope>
</reference>
<reference key="2">
    <citation type="journal article" date="1999" name="Nature">
        <title>Evidence for lateral gene transfer between Archaea and Bacteria from genome sequence of Thermotoga maritima.</title>
        <authorList>
            <person name="Nelson K.E."/>
            <person name="Clayton R.A."/>
            <person name="Gill S.R."/>
            <person name="Gwinn M.L."/>
            <person name="Dodson R.J."/>
            <person name="Haft D.H."/>
            <person name="Hickey E.K."/>
            <person name="Peterson J.D."/>
            <person name="Nelson W.C."/>
            <person name="Ketchum K.A."/>
            <person name="McDonald L.A."/>
            <person name="Utterback T.R."/>
            <person name="Malek J.A."/>
            <person name="Linher K.D."/>
            <person name="Garrett M.M."/>
            <person name="Stewart A.M."/>
            <person name="Cotton M.D."/>
            <person name="Pratt M.S."/>
            <person name="Phillips C.A."/>
            <person name="Richardson D.L."/>
            <person name="Heidelberg J.F."/>
            <person name="Sutton G.G."/>
            <person name="Fleischmann R.D."/>
            <person name="Eisen J.A."/>
            <person name="White O."/>
            <person name="Salzberg S.L."/>
            <person name="Smith H.O."/>
            <person name="Venter J.C."/>
            <person name="Fraser C.M."/>
        </authorList>
    </citation>
    <scope>NUCLEOTIDE SEQUENCE [LARGE SCALE GENOMIC DNA]</scope>
    <source>
        <strain>ATCC 43589 / DSM 3109 / JCM 10099 / NBRC 100826 / MSB8</strain>
    </source>
</reference>
<evidence type="ECO:0000250" key="1"/>
<evidence type="ECO:0000305" key="2"/>
<organism>
    <name type="scientific">Thermotoga maritima (strain ATCC 43589 / DSM 3109 / JCM 10099 / NBRC 100826 / MSB8)</name>
    <dbReference type="NCBI Taxonomy" id="243274"/>
    <lineage>
        <taxon>Bacteria</taxon>
        <taxon>Thermotogati</taxon>
        <taxon>Thermotogota</taxon>
        <taxon>Thermotogae</taxon>
        <taxon>Thermotogales</taxon>
        <taxon>Thermotogaceae</taxon>
        <taxon>Thermotoga</taxon>
    </lineage>
</organism>
<comment type="function">
    <text evidence="1">Acts as a chaperone.</text>
</comment>
<comment type="induction">
    <text evidence="1">By stress conditions e.g. heat shock (By similarity).</text>
</comment>
<comment type="similarity">
    <text evidence="2">Belongs to the heat shock protein 70 family.</text>
</comment>
<gene>
    <name type="primary">dnaK</name>
    <name type="synonym">hsp70</name>
    <name type="ordered locus">TM_0373</name>
</gene>
<sequence length="596" mass="66052">MAEKKEFVVGIDLGTTNSVIAWMKPDGTVEVIPNAEGSRVTPSVVAFTKSGEILVGEPAKRQMILNPERTIKSIKRKMGTDYKVRIDDKEYTPQEISAFILKKLKNDAEAYLGGEIKKAVITCPAYFNDAQRQATKEAGIIAGLEVLRIINEPTAAALAYGLDKAGKEEKVLVYDLGGGTFDVSILEIGEGVIEVIATAGNNHLGGDDFDQRLIDWMAEEFKKQHGIDLREDRQALQRLRDAAEKAKIELSTKMETDVSLPFIAVSPSGQPLHLEMRITRSLFESLTRDLVEMTRGPIEQALNDAKLSPQDIDEIILVGGMTRVPMVQRFIKEFFGKEPNKSVNPDEAVAIGAAIQAAILAGTEGAKGRDIVLVDVTPLTLGIEVKGGLFEPIIPRNTKIPVRKSKIFTTVEDGQTEVEIRVYQGERPIARENIFLGSFKLVGIPPAPRGVPQIEVTFDIDSDGIVHVSAKDLGSGKEQSMVVTGRHKLSEDEIKRMIEDAKRYEEQDKRLKEEIELKNRADDLAYSVEKTLKEHGDKIPADLKSRLEDMIRELRDAINRNDIPKVKMLFDDLQKESMKIGEYLYKSATGGETSNQ</sequence>